<reference key="1">
    <citation type="journal article" date="1993" name="Plant Physiol.">
        <title>Vacuolar H(+)-ATPase 69-kilodalton catalytic subunit cDNA from developing cotton (Gossypium hirsutum) ovules.</title>
        <authorList>
            <person name="Wilkins T.A."/>
        </authorList>
    </citation>
    <scope>NUCLEOTIDE SEQUENCE [MRNA]</scope>
</reference>
<reference key="2">
    <citation type="submission" date="1994-03" db="EMBL/GenBank/DDBJ databases">
        <authorList>
            <person name="Wilkins T.A."/>
            <person name="Wan C."/>
            <person name="Lu C."/>
        </authorList>
    </citation>
    <scope>NUCLEOTIDE SEQUENCE OF 137-160</scope>
    <source>
        <strain>cv. Acala SJ2</strain>
    </source>
</reference>
<name>VATA_GOSHI</name>
<feature type="chain" id="PRO_0000144580" description="V-type proton ATPase catalytic subunit A">
    <location>
        <begin position="1"/>
        <end position="623"/>
    </location>
</feature>
<feature type="binding site" evidence="1">
    <location>
        <begin position="252"/>
        <end position="259"/>
    </location>
    <ligand>
        <name>ATP</name>
        <dbReference type="ChEBI" id="CHEBI:30616"/>
    </ligand>
</feature>
<comment type="function">
    <text>Catalytic subunit of the peripheral V1 complex of vacuolar ATPase. V-ATPase vacuolar ATPase is responsible for acidifying a variety of intracellular compartments in eukaryotic cells.</text>
</comment>
<comment type="catalytic activity">
    <reaction>
        <text>ATP + H2O + 4 H(+)(in) = ADP + phosphate + 5 H(+)(out)</text>
        <dbReference type="Rhea" id="RHEA:57720"/>
        <dbReference type="ChEBI" id="CHEBI:15377"/>
        <dbReference type="ChEBI" id="CHEBI:15378"/>
        <dbReference type="ChEBI" id="CHEBI:30616"/>
        <dbReference type="ChEBI" id="CHEBI:43474"/>
        <dbReference type="ChEBI" id="CHEBI:456216"/>
        <dbReference type="EC" id="7.1.2.2"/>
    </reaction>
</comment>
<comment type="subunit">
    <text>V-ATPase is a heteromultimeric enzyme composed of a peripheral catalytic V1 complex (main components: subunits A, B, C, D, E, and F) attached to an integral membrane V0 proton pore complex (main component: the proteolipid protein).</text>
</comment>
<comment type="similarity">
    <text evidence="2">Belongs to the ATPase alpha/beta chains family.</text>
</comment>
<gene>
    <name type="primary">CVA69.24</name>
</gene>
<keyword id="KW-0067">ATP-binding</keyword>
<keyword id="KW-0375">Hydrogen ion transport</keyword>
<keyword id="KW-0406">Ion transport</keyword>
<keyword id="KW-0547">Nucleotide-binding</keyword>
<keyword id="KW-1185">Reference proteome</keyword>
<keyword id="KW-1278">Translocase</keyword>
<keyword id="KW-0813">Transport</keyword>
<sequence length="623" mass="68522">MPAVYGSRLTTFEDSEKESEYGYVRKVSGPVVVADGMAGAAMYELVRVGHDNLIGEIIRLEGDSATIQVYEETAGLMVNDPVLRTHKPLSVELGPGILGNIFDGIQRPLKTIAKRSGDVYIPRGVSVPALDKDALWDFQPKKIGEGDLLTGGDLYATVFENSLMQHHVALPPDAMGKITYIAPPGQYSLKDTVLELEFQGVKKQFTMLQTWPVRTPRPVATKLAADTPLLTGQRVLDALFPSVLGGTCAIPGAFGCGKTVISQALSKYSNSDAVVYVGCGERGNEMAEVLMDFPQLTMTLPDGREESVMKRTTLVANTSNMPVAAREASIYTGITIAEYFRDMGYNVSMMADSTSRWAEALREISGRLAEMPADSGYPAYLAARLASFYERAGKVKCLGGPERTGSVTIVGAVSPPGGDFSDPVTSATLSIVQVFWGLDKKLAQRKHFPSVNWLISYSKYSGALESFYEKFDPDFISIRTKAREVLQREDDLNEIVQLVGKDALAETDKITLETAKLLREDYLAQNAFTPYDKFCPFYKSVWMMRNIVHFNALANQAVEKAAGMDGQKITYSLIKHRLGDLFYRLVSQKFEDPAEGEEALVAKFKKLNEDLTAGFRALEDETR</sequence>
<accession>P31405</accession>
<evidence type="ECO:0000250" key="1"/>
<evidence type="ECO:0000305" key="2"/>
<organism>
    <name type="scientific">Gossypium hirsutum</name>
    <name type="common">Upland cotton</name>
    <name type="synonym">Gossypium mexicanum</name>
    <dbReference type="NCBI Taxonomy" id="3635"/>
    <lineage>
        <taxon>Eukaryota</taxon>
        <taxon>Viridiplantae</taxon>
        <taxon>Streptophyta</taxon>
        <taxon>Embryophyta</taxon>
        <taxon>Tracheophyta</taxon>
        <taxon>Spermatophyta</taxon>
        <taxon>Magnoliopsida</taxon>
        <taxon>eudicotyledons</taxon>
        <taxon>Gunneridae</taxon>
        <taxon>Pentapetalae</taxon>
        <taxon>rosids</taxon>
        <taxon>malvids</taxon>
        <taxon>Malvales</taxon>
        <taxon>Malvaceae</taxon>
        <taxon>Malvoideae</taxon>
        <taxon>Gossypium</taxon>
    </lineage>
</organism>
<protein>
    <recommendedName>
        <fullName>V-type proton ATPase catalytic subunit A</fullName>
        <shortName>V-ATPase subunit A</shortName>
        <ecNumber>7.1.2.2</ecNumber>
    </recommendedName>
    <alternativeName>
        <fullName>V-ATPase 69 kDa subunit</fullName>
    </alternativeName>
    <alternativeName>
        <fullName>Vacuolar proton pump subunit alpha</fullName>
    </alternativeName>
</protein>
<dbReference type="EC" id="7.1.2.2"/>
<dbReference type="EMBL" id="L03186">
    <property type="protein sequence ID" value="AAA33050.1"/>
    <property type="molecule type" value="mRNA"/>
</dbReference>
<dbReference type="EMBL" id="U06255">
    <property type="protein sequence ID" value="AAA16505.1"/>
    <property type="molecule type" value="Genomic_DNA"/>
</dbReference>
<dbReference type="EMBL" id="U06256">
    <property type="protein sequence ID" value="AAA16506.1"/>
    <property type="molecule type" value="Genomic_DNA"/>
</dbReference>
<dbReference type="EMBL" id="U06257">
    <property type="protein sequence ID" value="AAA16507.1"/>
    <property type="molecule type" value="Genomic_DNA"/>
</dbReference>
<dbReference type="EMBL" id="U06464">
    <property type="protein sequence ID" value="AAA16508.1"/>
    <property type="molecule type" value="Genomic_DNA"/>
</dbReference>
<dbReference type="RefSeq" id="NP_001314243.1">
    <property type="nucleotide sequence ID" value="NM_001327314.1"/>
</dbReference>
<dbReference type="SMR" id="P31405"/>
<dbReference type="STRING" id="3635.P31405"/>
<dbReference type="PaxDb" id="3635-P31405"/>
<dbReference type="GeneID" id="107930394"/>
<dbReference type="KEGG" id="ghi:107930394"/>
<dbReference type="OMA" id="SDARKYP"/>
<dbReference type="OrthoDB" id="16176at41938"/>
<dbReference type="Proteomes" id="UP000189702">
    <property type="component" value="Unplaced"/>
</dbReference>
<dbReference type="GO" id="GO:0000325">
    <property type="term" value="C:plant-type vacuole"/>
    <property type="evidence" value="ECO:0000318"/>
    <property type="project" value="GO_Central"/>
</dbReference>
<dbReference type="GO" id="GO:0009705">
    <property type="term" value="C:plant-type vacuole membrane"/>
    <property type="evidence" value="ECO:0000314"/>
    <property type="project" value="AgBase"/>
</dbReference>
<dbReference type="GO" id="GO:0033180">
    <property type="term" value="C:proton-transporting V-type ATPase, V1 domain"/>
    <property type="evidence" value="ECO:0007669"/>
    <property type="project" value="InterPro"/>
</dbReference>
<dbReference type="GO" id="GO:0005524">
    <property type="term" value="F:ATP binding"/>
    <property type="evidence" value="ECO:0007669"/>
    <property type="project" value="UniProtKB-KW"/>
</dbReference>
<dbReference type="GO" id="GO:0016887">
    <property type="term" value="F:ATP hydrolysis activity"/>
    <property type="evidence" value="ECO:0000314"/>
    <property type="project" value="AgBase"/>
</dbReference>
<dbReference type="GO" id="GO:0046961">
    <property type="term" value="F:proton-transporting ATPase activity, rotational mechanism"/>
    <property type="evidence" value="ECO:0000318"/>
    <property type="project" value="GO_Central"/>
</dbReference>
<dbReference type="GO" id="GO:0046034">
    <property type="term" value="P:ATP metabolic process"/>
    <property type="evidence" value="ECO:0007669"/>
    <property type="project" value="InterPro"/>
</dbReference>
<dbReference type="GO" id="GO:1902600">
    <property type="term" value="P:proton transmembrane transport"/>
    <property type="evidence" value="ECO:0000318"/>
    <property type="project" value="GO_Central"/>
</dbReference>
<dbReference type="GO" id="GO:0090378">
    <property type="term" value="P:seed trichome elongation"/>
    <property type="evidence" value="ECO:0000270"/>
    <property type="project" value="AgBase"/>
</dbReference>
<dbReference type="GO" id="GO:0090377">
    <property type="term" value="P:seed trichome initiation"/>
    <property type="evidence" value="ECO:0000270"/>
    <property type="project" value="AgBase"/>
</dbReference>
<dbReference type="CDD" id="cd18111">
    <property type="entry name" value="ATP-synt_V_A-type_alpha_C"/>
    <property type="match status" value="1"/>
</dbReference>
<dbReference type="CDD" id="cd18119">
    <property type="entry name" value="ATP-synt_V_A-type_alpha_N"/>
    <property type="match status" value="1"/>
</dbReference>
<dbReference type="CDD" id="cd01134">
    <property type="entry name" value="V_A-ATPase_A"/>
    <property type="match status" value="1"/>
</dbReference>
<dbReference type="FunFam" id="1.10.1140.10:FF:000002">
    <property type="entry name" value="V-type proton ATPase catalytic subunit A"/>
    <property type="match status" value="1"/>
</dbReference>
<dbReference type="FunFam" id="2.40.30.20:FF:000002">
    <property type="entry name" value="V-type proton ATPase catalytic subunit A"/>
    <property type="match status" value="1"/>
</dbReference>
<dbReference type="FunFam" id="2.40.50.100:FF:000008">
    <property type="entry name" value="V-type proton ATPase catalytic subunit A"/>
    <property type="match status" value="1"/>
</dbReference>
<dbReference type="FunFam" id="3.40.50.300:FF:000052">
    <property type="entry name" value="V-type proton ATPase catalytic subunit A"/>
    <property type="match status" value="1"/>
</dbReference>
<dbReference type="Gene3D" id="2.40.30.20">
    <property type="match status" value="1"/>
</dbReference>
<dbReference type="Gene3D" id="2.40.50.100">
    <property type="match status" value="1"/>
</dbReference>
<dbReference type="Gene3D" id="1.10.1140.10">
    <property type="entry name" value="Bovine Mitochondrial F1-atpase, Atp Synthase Beta Chain, Chain D, domain 3"/>
    <property type="match status" value="1"/>
</dbReference>
<dbReference type="Gene3D" id="3.40.50.300">
    <property type="entry name" value="P-loop containing nucleotide triphosphate hydrolases"/>
    <property type="match status" value="1"/>
</dbReference>
<dbReference type="HAMAP" id="MF_00309">
    <property type="entry name" value="ATP_synth_A_arch"/>
    <property type="match status" value="1"/>
</dbReference>
<dbReference type="InterPro" id="IPR055190">
    <property type="entry name" value="ATP-synt_VA_C"/>
</dbReference>
<dbReference type="InterPro" id="IPR031686">
    <property type="entry name" value="ATP-synth_a_Xtn"/>
</dbReference>
<dbReference type="InterPro" id="IPR023366">
    <property type="entry name" value="ATP_synth_asu-like_sf"/>
</dbReference>
<dbReference type="InterPro" id="IPR020003">
    <property type="entry name" value="ATPase_a/bsu_AS"/>
</dbReference>
<dbReference type="InterPro" id="IPR004100">
    <property type="entry name" value="ATPase_F1/V1/A1_a/bsu_N"/>
</dbReference>
<dbReference type="InterPro" id="IPR036121">
    <property type="entry name" value="ATPase_F1/V1/A1_a/bsu_N_sf"/>
</dbReference>
<dbReference type="InterPro" id="IPR000194">
    <property type="entry name" value="ATPase_F1/V1/A1_a/bsu_nucl-bd"/>
</dbReference>
<dbReference type="InterPro" id="IPR024034">
    <property type="entry name" value="ATPase_F1/V1_b/a_C"/>
</dbReference>
<dbReference type="InterPro" id="IPR005725">
    <property type="entry name" value="ATPase_V1-cplx_asu"/>
</dbReference>
<dbReference type="InterPro" id="IPR027417">
    <property type="entry name" value="P-loop_NTPase"/>
</dbReference>
<dbReference type="InterPro" id="IPR022878">
    <property type="entry name" value="V-ATPase_asu"/>
</dbReference>
<dbReference type="NCBIfam" id="NF003220">
    <property type="entry name" value="PRK04192.1"/>
    <property type="match status" value="1"/>
</dbReference>
<dbReference type="NCBIfam" id="TIGR01042">
    <property type="entry name" value="V-ATPase_V1_A"/>
    <property type="match status" value="1"/>
</dbReference>
<dbReference type="PANTHER" id="PTHR43607:SF1">
    <property type="entry name" value="H(+)-TRANSPORTING TWO-SECTOR ATPASE"/>
    <property type="match status" value="1"/>
</dbReference>
<dbReference type="PANTHER" id="PTHR43607">
    <property type="entry name" value="V-TYPE PROTON ATPASE CATALYTIC SUBUNIT A"/>
    <property type="match status" value="1"/>
</dbReference>
<dbReference type="Pfam" id="PF00006">
    <property type="entry name" value="ATP-synt_ab"/>
    <property type="match status" value="1"/>
</dbReference>
<dbReference type="Pfam" id="PF02874">
    <property type="entry name" value="ATP-synt_ab_N"/>
    <property type="match status" value="1"/>
</dbReference>
<dbReference type="Pfam" id="PF16886">
    <property type="entry name" value="ATP-synt_ab_Xtn"/>
    <property type="match status" value="1"/>
</dbReference>
<dbReference type="Pfam" id="PF22919">
    <property type="entry name" value="ATP-synt_VA_C"/>
    <property type="match status" value="1"/>
</dbReference>
<dbReference type="SUPFAM" id="SSF47917">
    <property type="entry name" value="C-terminal domain of alpha and beta subunits of F1 ATP synthase"/>
    <property type="match status" value="1"/>
</dbReference>
<dbReference type="SUPFAM" id="SSF50615">
    <property type="entry name" value="N-terminal domain of alpha and beta subunits of F1 ATP synthase"/>
    <property type="match status" value="1"/>
</dbReference>
<dbReference type="SUPFAM" id="SSF52540">
    <property type="entry name" value="P-loop containing nucleoside triphosphate hydrolases"/>
    <property type="match status" value="1"/>
</dbReference>
<dbReference type="PROSITE" id="PS00152">
    <property type="entry name" value="ATPASE_ALPHA_BETA"/>
    <property type="match status" value="1"/>
</dbReference>
<proteinExistence type="evidence at transcript level"/>